<organism>
    <name type="scientific">Phaseolus vulgaris</name>
    <name type="common">Kidney bean</name>
    <name type="synonym">French bean</name>
    <dbReference type="NCBI Taxonomy" id="3885"/>
    <lineage>
        <taxon>Eukaryota</taxon>
        <taxon>Viridiplantae</taxon>
        <taxon>Streptophyta</taxon>
        <taxon>Embryophyta</taxon>
        <taxon>Tracheophyta</taxon>
        <taxon>Spermatophyta</taxon>
        <taxon>Magnoliopsida</taxon>
        <taxon>eudicotyledons</taxon>
        <taxon>Gunneridae</taxon>
        <taxon>Pentapetalae</taxon>
        <taxon>rosids</taxon>
        <taxon>fabids</taxon>
        <taxon>Fabales</taxon>
        <taxon>Fabaceae</taxon>
        <taxon>Papilionoideae</taxon>
        <taxon>50 kb inversion clade</taxon>
        <taxon>NPAAA clade</taxon>
        <taxon>indigoferoid/millettioid clade</taxon>
        <taxon>Phaseoleae</taxon>
        <taxon>Phaseolus</taxon>
    </lineage>
</organism>
<evidence type="ECO:0000255" key="1">
    <source>
        <dbReference type="HAMAP-Rule" id="MF_01316"/>
    </source>
</evidence>
<gene>
    <name evidence="1" type="primary">psbI</name>
</gene>
<name>PSBI_PHAVU</name>
<geneLocation type="chloroplast"/>
<protein>
    <recommendedName>
        <fullName evidence="1">Photosystem II reaction center protein I</fullName>
        <shortName evidence="1">PSII-I</shortName>
    </recommendedName>
    <alternativeName>
        <fullName evidence="1">PSII 4.8 kDa protein</fullName>
    </alternativeName>
</protein>
<comment type="function">
    <text evidence="1">One of the components of the core complex of photosystem II (PSII), required for its stability and/or assembly. PSII is a light-driven water:plastoquinone oxidoreductase that uses light energy to abstract electrons from H(2)O, generating O(2) and a proton gradient subsequently used for ATP formation. It consists of a core antenna complex that captures photons, and an electron transfer chain that converts photonic excitation into a charge separation.</text>
</comment>
<comment type="subunit">
    <text evidence="1">PSII is composed of 1 copy each of membrane proteins PsbA, PsbB, PsbC, PsbD, PsbE, PsbF, PsbH, PsbI, PsbJ, PsbK, PsbL, PsbM, PsbT, PsbX, PsbY, PsbZ, Psb30/Ycf12, at least 3 peripheral proteins of the oxygen-evolving complex and a large number of cofactors. It forms dimeric complexes.</text>
</comment>
<comment type="subcellular location">
    <subcellularLocation>
        <location evidence="1">Plastid</location>
        <location evidence="1">Chloroplast thylakoid membrane</location>
        <topology evidence="1">Single-pass membrane protein</topology>
    </subcellularLocation>
</comment>
<comment type="similarity">
    <text evidence="1">Belongs to the PsbI family.</text>
</comment>
<proteinExistence type="inferred from homology"/>
<reference key="1">
    <citation type="journal article" date="2007" name="BMC Genomics">
        <title>Rapid evolutionary change of common bean (Phaseolus vulgaris L) plastome, and the genomic diversification of legume chloroplasts.</title>
        <authorList>
            <person name="Guo X."/>
            <person name="Castillo-Ramirez S."/>
            <person name="Gonzalez V."/>
            <person name="Bustos P."/>
            <person name="Fernandez-Vazquez J.L."/>
            <person name="Santamaria R.I."/>
            <person name="Arellano J."/>
            <person name="Cevallos M.A."/>
            <person name="Davila G."/>
        </authorList>
    </citation>
    <scope>NUCLEOTIDE SEQUENCE [LARGE SCALE GENOMIC DNA]</scope>
    <source>
        <strain>cv. Negro Jamapa</strain>
    </source>
</reference>
<reference key="2">
    <citation type="submission" date="2007-10" db="EMBL/GenBank/DDBJ databases">
        <title>Complete nucleotide sequence of the plastid genome of the common bean, Phaseolus vulgaris.</title>
        <authorList>
            <person name="Moore M.J."/>
            <person name="Triplett E.W."/>
            <person name="Broughton W.J."/>
            <person name="Soltis P.S."/>
            <person name="Soltis D.E."/>
        </authorList>
    </citation>
    <scope>NUCLEOTIDE SEQUENCE [LARGE SCALE GENOMIC DNA]</scope>
</reference>
<dbReference type="EMBL" id="DQ886273">
    <property type="protein sequence ID" value="ABH88094.1"/>
    <property type="molecule type" value="Genomic_DNA"/>
</dbReference>
<dbReference type="EMBL" id="EU196765">
    <property type="protein sequence ID" value="ABW22774.1"/>
    <property type="molecule type" value="Genomic_DNA"/>
</dbReference>
<dbReference type="RefSeq" id="YP_001122814.1">
    <property type="nucleotide sequence ID" value="NC_009259.1"/>
</dbReference>
<dbReference type="SMR" id="A4GGB3"/>
<dbReference type="GeneID" id="4961806"/>
<dbReference type="KEGG" id="pvu:4961806"/>
<dbReference type="GO" id="GO:0009535">
    <property type="term" value="C:chloroplast thylakoid membrane"/>
    <property type="evidence" value="ECO:0007669"/>
    <property type="project" value="UniProtKB-SubCell"/>
</dbReference>
<dbReference type="GO" id="GO:0009539">
    <property type="term" value="C:photosystem II reaction center"/>
    <property type="evidence" value="ECO:0007669"/>
    <property type="project" value="InterPro"/>
</dbReference>
<dbReference type="GO" id="GO:0015979">
    <property type="term" value="P:photosynthesis"/>
    <property type="evidence" value="ECO:0007669"/>
    <property type="project" value="UniProtKB-UniRule"/>
</dbReference>
<dbReference type="HAMAP" id="MF_01316">
    <property type="entry name" value="PSII_PsbI"/>
    <property type="match status" value="1"/>
</dbReference>
<dbReference type="InterPro" id="IPR003686">
    <property type="entry name" value="PSII_PsbI"/>
</dbReference>
<dbReference type="InterPro" id="IPR037271">
    <property type="entry name" value="PSII_PsbI_sf"/>
</dbReference>
<dbReference type="NCBIfam" id="NF002735">
    <property type="entry name" value="PRK02655.1"/>
    <property type="match status" value="1"/>
</dbReference>
<dbReference type="PANTHER" id="PTHR35772">
    <property type="entry name" value="PHOTOSYSTEM II REACTION CENTER PROTEIN I"/>
    <property type="match status" value="1"/>
</dbReference>
<dbReference type="PANTHER" id="PTHR35772:SF1">
    <property type="entry name" value="PHOTOSYSTEM II REACTION CENTER PROTEIN I"/>
    <property type="match status" value="1"/>
</dbReference>
<dbReference type="Pfam" id="PF02532">
    <property type="entry name" value="PsbI"/>
    <property type="match status" value="1"/>
</dbReference>
<dbReference type="SUPFAM" id="SSF161041">
    <property type="entry name" value="Photosystem II reaction center protein I, PsbI"/>
    <property type="match status" value="1"/>
</dbReference>
<accession>A4GGB3</accession>
<accession>A8W804</accession>
<keyword id="KW-0150">Chloroplast</keyword>
<keyword id="KW-0472">Membrane</keyword>
<keyword id="KW-0602">Photosynthesis</keyword>
<keyword id="KW-0604">Photosystem II</keyword>
<keyword id="KW-0934">Plastid</keyword>
<keyword id="KW-0674">Reaction center</keyword>
<keyword id="KW-0793">Thylakoid</keyword>
<keyword id="KW-0812">Transmembrane</keyword>
<keyword id="KW-1133">Transmembrane helix</keyword>
<sequence length="36" mass="4168">MLTLKLFVYTVVIFFVSLFIFGFLSNDPGRNPGREE</sequence>
<feature type="chain" id="PRO_0000298325" description="Photosystem II reaction center protein I">
    <location>
        <begin position="1"/>
        <end position="36"/>
    </location>
</feature>
<feature type="transmembrane region" description="Helical" evidence="1">
    <location>
        <begin position="4"/>
        <end position="24"/>
    </location>
</feature>